<feature type="chain" id="PRO_0000050316" description="Sialic acid transporter NanT">
    <location>
        <begin position="1"/>
        <end position="496"/>
    </location>
</feature>
<feature type="transmembrane region" description="Helical" evidence="1">
    <location>
        <begin position="22"/>
        <end position="42"/>
    </location>
</feature>
<feature type="transmembrane region" description="Helical" evidence="1">
    <location>
        <begin position="58"/>
        <end position="78"/>
    </location>
</feature>
<feature type="transmembrane region" description="Helical" evidence="1">
    <location>
        <begin position="86"/>
        <end position="106"/>
    </location>
</feature>
<feature type="transmembrane region" description="Helical" evidence="1">
    <location>
        <begin position="116"/>
        <end position="136"/>
    </location>
</feature>
<feature type="transmembrane region" description="Helical" evidence="1">
    <location>
        <begin position="148"/>
        <end position="168"/>
    </location>
</feature>
<feature type="transmembrane region" description="Helical" evidence="1">
    <location>
        <begin position="170"/>
        <end position="190"/>
    </location>
</feature>
<feature type="transmembrane region" description="Helical" evidence="1">
    <location>
        <begin position="224"/>
        <end position="244"/>
    </location>
</feature>
<feature type="transmembrane region" description="Helical" evidence="1">
    <location>
        <begin position="247"/>
        <end position="267"/>
    </location>
</feature>
<feature type="transmembrane region" description="Helical" evidence="1">
    <location>
        <begin position="278"/>
        <end position="298"/>
    </location>
</feature>
<feature type="transmembrane region" description="Helical" evidence="1">
    <location>
        <begin position="313"/>
        <end position="333"/>
    </location>
</feature>
<feature type="transmembrane region" description="Helical" evidence="1">
    <location>
        <begin position="353"/>
        <end position="373"/>
    </location>
</feature>
<feature type="transmembrane region" description="Helical" evidence="1">
    <location>
        <begin position="374"/>
        <end position="394"/>
    </location>
</feature>
<feature type="transmembrane region" description="Helical" evidence="1">
    <location>
        <begin position="406"/>
        <end position="426"/>
    </location>
</feature>
<feature type="transmembrane region" description="Helical" evidence="1">
    <location>
        <begin position="431"/>
        <end position="451"/>
    </location>
</feature>
<proteinExistence type="inferred from homology"/>
<name>NANT_SALTY</name>
<sequence length="496" mass="53629">MSTSTQNIPWYRHLNRAQWRAFSAAWLGYLLDGFDFVLIALVLTEVQSEFGLTTVQAASLISAAFISRWFGGLLLGAMGDRYGRRLAMVSSIILFSVGTLACGFAPGYTTMFIARLVIGMGMAGEYGSSATYVIESWPKHLRNKASGFLISGFSVGAVVAAQVYSLVVPVWGWRALFFIGILPIIFALWLRKNIPEAEDWKEKHAGKAPVRTMVDILYRGEHRIINILMTFAAAAALWFCFAGNLQNAAIVAGLGLLCAVIFISFMVQSSGKRWPTGVMLMLVVLFAFLYSWPIQALLPTYLKTELAYDPHTVANVLFFSGFGAAVGCCVGGFLGDWLGTRKAYVCSLLASQILIIPVFAIGGTNVWVLGLLLFFQQMLGQGIAGILPKLIGGYFDTDQRAAGLGFTYNVGALGGALAPILGALIAQRLDLGTALASLSFSLTFVVILLIGLDMPSRVQRWLRPEALRTHDAIDDKPFSGAVPLGSGKGAFVKTKS</sequence>
<dbReference type="EMBL" id="AE006468">
    <property type="protein sequence ID" value="AAL22207.1"/>
    <property type="molecule type" value="Genomic_DNA"/>
</dbReference>
<dbReference type="RefSeq" id="NP_462248.1">
    <property type="nucleotide sequence ID" value="NC_003197.2"/>
</dbReference>
<dbReference type="RefSeq" id="WP_000108071.1">
    <property type="nucleotide sequence ID" value="NC_003197.2"/>
</dbReference>
<dbReference type="SMR" id="P0A2G5"/>
<dbReference type="STRING" id="99287.STM3338"/>
<dbReference type="PaxDb" id="99287-STM3338"/>
<dbReference type="GeneID" id="1254861"/>
<dbReference type="KEGG" id="stm:STM3338"/>
<dbReference type="PATRIC" id="fig|99287.12.peg.3539"/>
<dbReference type="HOGENOM" id="CLU_001265_46_8_6"/>
<dbReference type="OMA" id="SDITWGI"/>
<dbReference type="PhylomeDB" id="P0A2G5"/>
<dbReference type="BioCyc" id="SENT99287:STM3338-MONOMER"/>
<dbReference type="Proteomes" id="UP000001014">
    <property type="component" value="Chromosome"/>
</dbReference>
<dbReference type="GO" id="GO:0005886">
    <property type="term" value="C:plasma membrane"/>
    <property type="evidence" value="ECO:0000318"/>
    <property type="project" value="GO_Central"/>
</dbReference>
<dbReference type="GO" id="GO:0046943">
    <property type="term" value="F:carboxylic acid transmembrane transporter activity"/>
    <property type="evidence" value="ECO:0000318"/>
    <property type="project" value="GO_Central"/>
</dbReference>
<dbReference type="GO" id="GO:0015538">
    <property type="term" value="F:sialic acid:proton symporter activity"/>
    <property type="evidence" value="ECO:0007669"/>
    <property type="project" value="UniProtKB-UniRule"/>
</dbReference>
<dbReference type="GO" id="GO:0046942">
    <property type="term" value="P:carboxylic acid transport"/>
    <property type="evidence" value="ECO:0000318"/>
    <property type="project" value="GO_Central"/>
</dbReference>
<dbReference type="CDD" id="cd17316">
    <property type="entry name" value="MFS_SV2_like"/>
    <property type="match status" value="1"/>
</dbReference>
<dbReference type="FunFam" id="1.20.1250.20:FF:000027">
    <property type="entry name" value="Sialic acid transporter NanT"/>
    <property type="match status" value="1"/>
</dbReference>
<dbReference type="FunFam" id="1.20.1250.20:FF:000038">
    <property type="entry name" value="Sialic acid transporter NanT"/>
    <property type="match status" value="1"/>
</dbReference>
<dbReference type="Gene3D" id="1.20.1250.20">
    <property type="entry name" value="MFS general substrate transporter like domains"/>
    <property type="match status" value="2"/>
</dbReference>
<dbReference type="HAMAP" id="MF_01238">
    <property type="entry name" value="MFS_NanT"/>
    <property type="match status" value="1"/>
</dbReference>
<dbReference type="InterPro" id="IPR011701">
    <property type="entry name" value="MFS"/>
</dbReference>
<dbReference type="InterPro" id="IPR020846">
    <property type="entry name" value="MFS_dom"/>
</dbReference>
<dbReference type="InterPro" id="IPR036259">
    <property type="entry name" value="MFS_trans_sf"/>
</dbReference>
<dbReference type="InterPro" id="IPR004742">
    <property type="entry name" value="SA_transporter"/>
</dbReference>
<dbReference type="NCBIfam" id="TIGR00891">
    <property type="entry name" value="2A0112"/>
    <property type="match status" value="1"/>
</dbReference>
<dbReference type="NCBIfam" id="NF003024">
    <property type="entry name" value="PRK03893.1"/>
    <property type="match status" value="1"/>
</dbReference>
<dbReference type="PANTHER" id="PTHR23508">
    <property type="entry name" value="CARBOXYLIC ACID TRANSPORTER PROTEIN HOMOLOG"/>
    <property type="match status" value="1"/>
</dbReference>
<dbReference type="PANTHER" id="PTHR23508:SF3">
    <property type="entry name" value="SIALIC ACID TRANSPORTER NANT"/>
    <property type="match status" value="1"/>
</dbReference>
<dbReference type="Pfam" id="PF07690">
    <property type="entry name" value="MFS_1"/>
    <property type="match status" value="1"/>
</dbReference>
<dbReference type="SUPFAM" id="SSF103473">
    <property type="entry name" value="MFS general substrate transporter"/>
    <property type="match status" value="1"/>
</dbReference>
<dbReference type="PROSITE" id="PS50850">
    <property type="entry name" value="MFS"/>
    <property type="match status" value="1"/>
</dbReference>
<gene>
    <name evidence="1" type="primary">nanT</name>
    <name type="ordered locus">STM3338</name>
</gene>
<reference key="1">
    <citation type="journal article" date="2001" name="Nature">
        <title>Complete genome sequence of Salmonella enterica serovar Typhimurium LT2.</title>
        <authorList>
            <person name="McClelland M."/>
            <person name="Sanderson K.E."/>
            <person name="Spieth J."/>
            <person name="Clifton S.W."/>
            <person name="Latreille P."/>
            <person name="Courtney L."/>
            <person name="Porwollik S."/>
            <person name="Ali J."/>
            <person name="Dante M."/>
            <person name="Du F."/>
            <person name="Hou S."/>
            <person name="Layman D."/>
            <person name="Leonard S."/>
            <person name="Nguyen C."/>
            <person name="Scott K."/>
            <person name="Holmes A."/>
            <person name="Grewal N."/>
            <person name="Mulvaney E."/>
            <person name="Ryan E."/>
            <person name="Sun H."/>
            <person name="Florea L."/>
            <person name="Miller W."/>
            <person name="Stoneking T."/>
            <person name="Nhan M."/>
            <person name="Waterston R."/>
            <person name="Wilson R.K."/>
        </authorList>
    </citation>
    <scope>NUCLEOTIDE SEQUENCE [LARGE SCALE GENOMIC DNA]</scope>
    <source>
        <strain>LT2 / SGSC1412 / ATCC 700720</strain>
    </source>
</reference>
<evidence type="ECO:0000255" key="1">
    <source>
        <dbReference type="HAMAP-Rule" id="MF_01238"/>
    </source>
</evidence>
<protein>
    <recommendedName>
        <fullName evidence="1">Sialic acid transporter NanT</fullName>
    </recommendedName>
    <alternativeName>
        <fullName evidence="1">Sialic acid permease</fullName>
    </alternativeName>
    <alternativeName>
        <fullName evidence="1">Sialic acid/H(+) symporter</fullName>
    </alternativeName>
</protein>
<organism>
    <name type="scientific">Salmonella typhimurium (strain LT2 / SGSC1412 / ATCC 700720)</name>
    <dbReference type="NCBI Taxonomy" id="99287"/>
    <lineage>
        <taxon>Bacteria</taxon>
        <taxon>Pseudomonadati</taxon>
        <taxon>Pseudomonadota</taxon>
        <taxon>Gammaproteobacteria</taxon>
        <taxon>Enterobacterales</taxon>
        <taxon>Enterobacteriaceae</taxon>
        <taxon>Salmonella</taxon>
    </lineage>
</organism>
<accession>P0A2G5</accession>
<accession>Q8XFJ3</accession>
<comment type="function">
    <text evidence="1">Catalyzes the proton-dependent transport of sialic acid.</text>
</comment>
<comment type="catalytic activity">
    <reaction evidence="1">
        <text>N-acetylneuraminate(in) + H(+)(in) = N-acetylneuraminate(out) + H(+)(out)</text>
        <dbReference type="Rhea" id="RHEA:28987"/>
        <dbReference type="ChEBI" id="CHEBI:15378"/>
        <dbReference type="ChEBI" id="CHEBI:35418"/>
    </reaction>
</comment>
<comment type="subcellular location">
    <subcellularLocation>
        <location evidence="1">Cell inner membrane</location>
        <topology evidence="1">Multi-pass membrane protein</topology>
    </subcellularLocation>
</comment>
<comment type="similarity">
    <text evidence="1">Belongs to the major facilitator superfamily. Sialate:H(+) symporter (SHS) (TC 2.A.1.12) family.</text>
</comment>
<keyword id="KW-0997">Cell inner membrane</keyword>
<keyword id="KW-1003">Cell membrane</keyword>
<keyword id="KW-0472">Membrane</keyword>
<keyword id="KW-1185">Reference proteome</keyword>
<keyword id="KW-0762">Sugar transport</keyword>
<keyword id="KW-0812">Transmembrane</keyword>
<keyword id="KW-1133">Transmembrane helix</keyword>
<keyword id="KW-0813">Transport</keyword>